<protein>
    <recommendedName>
        <fullName>Putative ankyrin repeat protein L371</fullName>
    </recommendedName>
</protein>
<gene>
    <name type="ordered locus">MIMI_L371</name>
</gene>
<accession>Q5UQV3</accession>
<organism>
    <name type="scientific">Acanthamoeba polyphaga mimivirus</name>
    <name type="common">APMV</name>
    <dbReference type="NCBI Taxonomy" id="212035"/>
    <lineage>
        <taxon>Viruses</taxon>
        <taxon>Varidnaviria</taxon>
        <taxon>Bamfordvirae</taxon>
        <taxon>Nucleocytoviricota</taxon>
        <taxon>Megaviricetes</taxon>
        <taxon>Imitervirales</taxon>
        <taxon>Mimiviridae</taxon>
        <taxon>Megamimivirinae</taxon>
        <taxon>Mimivirus</taxon>
        <taxon>Mimivirus bradfordmassiliense</taxon>
    </lineage>
</organism>
<dbReference type="EMBL" id="AY653733">
    <property type="protein sequence ID" value="AAV50640.1"/>
    <property type="molecule type" value="Genomic_DNA"/>
</dbReference>
<dbReference type="SMR" id="Q5UQV3"/>
<dbReference type="KEGG" id="vg:9924992"/>
<dbReference type="OrthoDB" id="2569at10239"/>
<dbReference type="Proteomes" id="UP000001134">
    <property type="component" value="Genome"/>
</dbReference>
<dbReference type="Gene3D" id="1.25.40.20">
    <property type="entry name" value="Ankyrin repeat-containing domain"/>
    <property type="match status" value="3"/>
</dbReference>
<dbReference type="InterPro" id="IPR052457">
    <property type="entry name" value="Ankyrin-DD_containing_protein"/>
</dbReference>
<dbReference type="InterPro" id="IPR002110">
    <property type="entry name" value="Ankyrin_rpt"/>
</dbReference>
<dbReference type="InterPro" id="IPR036770">
    <property type="entry name" value="Ankyrin_rpt-contain_sf"/>
</dbReference>
<dbReference type="PANTHER" id="PTHR24125">
    <property type="entry name" value="ANKYRIN REPEAT AND DEATH DOMAIN-CONTAINING PROTEIN"/>
    <property type="match status" value="1"/>
</dbReference>
<dbReference type="PANTHER" id="PTHR24125:SF5">
    <property type="entry name" value="ANKYRIN REPEAT PROTEIN"/>
    <property type="match status" value="1"/>
</dbReference>
<dbReference type="Pfam" id="PF12796">
    <property type="entry name" value="Ank_2"/>
    <property type="match status" value="3"/>
</dbReference>
<dbReference type="SMART" id="SM00248">
    <property type="entry name" value="ANK"/>
    <property type="match status" value="9"/>
</dbReference>
<dbReference type="SUPFAM" id="SSF48403">
    <property type="entry name" value="Ankyrin repeat"/>
    <property type="match status" value="1"/>
</dbReference>
<dbReference type="PROSITE" id="PS50297">
    <property type="entry name" value="ANK_REP_REGION"/>
    <property type="match status" value="1"/>
</dbReference>
<dbReference type="PROSITE" id="PS50088">
    <property type="entry name" value="ANK_REPEAT"/>
    <property type="match status" value="3"/>
</dbReference>
<keyword id="KW-0040">ANK repeat</keyword>
<keyword id="KW-1185">Reference proteome</keyword>
<keyword id="KW-0677">Repeat</keyword>
<reference key="1">
    <citation type="journal article" date="2004" name="Science">
        <title>The 1.2-megabase genome sequence of Mimivirus.</title>
        <authorList>
            <person name="Raoult D."/>
            <person name="Audic S."/>
            <person name="Robert C."/>
            <person name="Abergel C."/>
            <person name="Renesto P."/>
            <person name="Ogata H."/>
            <person name="La Scola B."/>
            <person name="Susan M."/>
            <person name="Claverie J.-M."/>
        </authorList>
    </citation>
    <scope>NUCLEOTIDE SEQUENCE [LARGE SCALE GENOMIC DNA]</scope>
    <source>
        <strain>Rowbotham-Bradford</strain>
    </source>
</reference>
<name>YL371_MIMIV</name>
<feature type="chain" id="PRO_0000067169" description="Putative ankyrin repeat protein L371">
    <location>
        <begin position="1"/>
        <end position="765"/>
    </location>
</feature>
<feature type="repeat" description="ANK 1">
    <location>
        <begin position="60"/>
        <end position="89"/>
    </location>
</feature>
<feature type="repeat" description="ANK 2">
    <location>
        <begin position="93"/>
        <end position="122"/>
    </location>
</feature>
<feature type="repeat" description="ANK 3">
    <location>
        <begin position="132"/>
        <end position="161"/>
    </location>
</feature>
<feature type="repeat" description="ANK 4">
    <location>
        <begin position="165"/>
        <end position="194"/>
    </location>
</feature>
<feature type="repeat" description="ANK 5">
    <location>
        <begin position="198"/>
        <end position="227"/>
    </location>
</feature>
<feature type="repeat" description="ANK 6">
    <location>
        <begin position="232"/>
        <end position="261"/>
    </location>
</feature>
<feature type="repeat" description="ANK 7">
    <location>
        <begin position="265"/>
        <end position="295"/>
    </location>
</feature>
<feature type="repeat" description="ANK 8">
    <location>
        <begin position="322"/>
        <end position="353"/>
    </location>
</feature>
<feature type="repeat" description="ANK 9">
    <location>
        <begin position="357"/>
        <end position="395"/>
    </location>
</feature>
<proteinExistence type="predicted"/>
<organismHost>
    <name type="scientific">Acanthamoeba polyphaga</name>
    <name type="common">Amoeba</name>
    <dbReference type="NCBI Taxonomy" id="5757"/>
</organismHost>
<sequence>MYIIMNDFNGDDFNGDDFHSKTQHLNKLFNLIKSNKEKEFMDYINQLTPDQIDINIRDENGNYMIFFAIIMNSSTILKKLIKYGARLDVFDTEGNSVMYYPIKFGYYEIIDVLIDYDSKIIGISLINIKDHKGSVPLFYAIKYRNKYALQQLLSKDANANYRNNDNVNALHMAVLKKDISMVKLVIKHIKNLNARTRQGSTALHYACNFQLYDITKLLLDNGADQNIIELELDFYPIFYSVIQNDINISKLLVDYGANPNHQDYEGNTILHYCVIYNHMEIFDYIMNNYVIRCRSSDLYIEDINSKADIPRDHIDPNVVNLDGLTVVHLMLYDYKEEYDNFLKKLIPYCNLNYQDNTGNTILHLIAENNIWNKFDNLLNVKKLNIFIRNNNGKTVLDMIQVRYREIFIDTIVKSYYNYLNKYDNGWLLQWQNECSGSNLSEISEKKCLELIRNDVVNNKISLPTKKNKKSITIINDEIVHFSTFTGSLIDTVSGFKYLTKKYPKAASLIIDNQEITSDLQNYYQSIGIQINISQNIVQFEIKWIYQKIFMPIEFENTMQQIILSNKYKYIIFPISIILSSGNHSNGLFYDLEKQVIERFEPHGSDYPNKFNYNPDLLDDILEKKFKIIMSSIYHKNINIRYLRPRDYLPKIGFQTIENTEININKNIGDPNGFCTLWTIWYLDYRLSYADYDPSKLTRNLINEIRVNNYSFRNIIRNYSKKITDLRDYYLNKINRNINDYLNNRLTVNNTRDILRIIVDDDATVI</sequence>